<keyword id="KW-0963">Cytoplasm</keyword>
<keyword id="KW-0489">Methyltransferase</keyword>
<keyword id="KW-1185">Reference proteome</keyword>
<keyword id="KW-0698">rRNA processing</keyword>
<keyword id="KW-0949">S-adenosyl-L-methionine</keyword>
<keyword id="KW-0808">Transferase</keyword>
<dbReference type="EC" id="2.1.1.199" evidence="1"/>
<dbReference type="EMBL" id="CP001100">
    <property type="protein sequence ID" value="ACF13293.1"/>
    <property type="molecule type" value="Genomic_DNA"/>
</dbReference>
<dbReference type="RefSeq" id="WP_012499377.1">
    <property type="nucleotide sequence ID" value="NC_011026.1"/>
</dbReference>
<dbReference type="SMR" id="B3QWS9"/>
<dbReference type="STRING" id="517418.Ctha_0825"/>
<dbReference type="KEGG" id="cts:Ctha_0825"/>
<dbReference type="eggNOG" id="COG0275">
    <property type="taxonomic scope" value="Bacteria"/>
</dbReference>
<dbReference type="HOGENOM" id="CLU_038422_2_0_10"/>
<dbReference type="OrthoDB" id="9806637at2"/>
<dbReference type="Proteomes" id="UP000001208">
    <property type="component" value="Chromosome"/>
</dbReference>
<dbReference type="GO" id="GO:0005737">
    <property type="term" value="C:cytoplasm"/>
    <property type="evidence" value="ECO:0007669"/>
    <property type="project" value="UniProtKB-SubCell"/>
</dbReference>
<dbReference type="GO" id="GO:0071424">
    <property type="term" value="F:rRNA (cytosine-N4-)-methyltransferase activity"/>
    <property type="evidence" value="ECO:0007669"/>
    <property type="project" value="UniProtKB-UniRule"/>
</dbReference>
<dbReference type="GO" id="GO:0070475">
    <property type="term" value="P:rRNA base methylation"/>
    <property type="evidence" value="ECO:0007669"/>
    <property type="project" value="UniProtKB-UniRule"/>
</dbReference>
<dbReference type="Gene3D" id="1.10.150.170">
    <property type="entry name" value="Putative methyltransferase TM0872, insert domain"/>
    <property type="match status" value="1"/>
</dbReference>
<dbReference type="Gene3D" id="3.40.50.150">
    <property type="entry name" value="Vaccinia Virus protein VP39"/>
    <property type="match status" value="1"/>
</dbReference>
<dbReference type="HAMAP" id="MF_01007">
    <property type="entry name" value="16SrRNA_methyltr_H"/>
    <property type="match status" value="1"/>
</dbReference>
<dbReference type="InterPro" id="IPR002903">
    <property type="entry name" value="RsmH"/>
</dbReference>
<dbReference type="InterPro" id="IPR023397">
    <property type="entry name" value="SAM-dep_MeTrfase_MraW_recog"/>
</dbReference>
<dbReference type="InterPro" id="IPR029063">
    <property type="entry name" value="SAM-dependent_MTases_sf"/>
</dbReference>
<dbReference type="NCBIfam" id="TIGR00006">
    <property type="entry name" value="16S rRNA (cytosine(1402)-N(4))-methyltransferase RsmH"/>
    <property type="match status" value="1"/>
</dbReference>
<dbReference type="PANTHER" id="PTHR11265:SF0">
    <property type="entry name" value="12S RRNA N4-METHYLCYTIDINE METHYLTRANSFERASE"/>
    <property type="match status" value="1"/>
</dbReference>
<dbReference type="PANTHER" id="PTHR11265">
    <property type="entry name" value="S-ADENOSYL-METHYLTRANSFERASE MRAW"/>
    <property type="match status" value="1"/>
</dbReference>
<dbReference type="Pfam" id="PF01795">
    <property type="entry name" value="Methyltransf_5"/>
    <property type="match status" value="1"/>
</dbReference>
<dbReference type="PIRSF" id="PIRSF004486">
    <property type="entry name" value="MraW"/>
    <property type="match status" value="1"/>
</dbReference>
<dbReference type="SUPFAM" id="SSF81799">
    <property type="entry name" value="Putative methyltransferase TM0872, insert domain"/>
    <property type="match status" value="1"/>
</dbReference>
<dbReference type="SUPFAM" id="SSF53335">
    <property type="entry name" value="S-adenosyl-L-methionine-dependent methyltransferases"/>
    <property type="match status" value="1"/>
</dbReference>
<gene>
    <name evidence="1" type="primary">rsmH</name>
    <name type="synonym">mraW</name>
    <name type="ordered locus">Ctha_0825</name>
</gene>
<comment type="function">
    <text evidence="1">Specifically methylates the N4 position of cytidine in position 1402 (C1402) of 16S rRNA.</text>
</comment>
<comment type="catalytic activity">
    <reaction evidence="1">
        <text>cytidine(1402) in 16S rRNA + S-adenosyl-L-methionine = N(4)-methylcytidine(1402) in 16S rRNA + S-adenosyl-L-homocysteine + H(+)</text>
        <dbReference type="Rhea" id="RHEA:42928"/>
        <dbReference type="Rhea" id="RHEA-COMP:10286"/>
        <dbReference type="Rhea" id="RHEA-COMP:10287"/>
        <dbReference type="ChEBI" id="CHEBI:15378"/>
        <dbReference type="ChEBI" id="CHEBI:57856"/>
        <dbReference type="ChEBI" id="CHEBI:59789"/>
        <dbReference type="ChEBI" id="CHEBI:74506"/>
        <dbReference type="ChEBI" id="CHEBI:82748"/>
        <dbReference type="EC" id="2.1.1.199"/>
    </reaction>
</comment>
<comment type="subcellular location">
    <subcellularLocation>
        <location evidence="1">Cytoplasm</location>
    </subcellularLocation>
</comment>
<comment type="similarity">
    <text evidence="1">Belongs to the methyltransferase superfamily. RsmH family.</text>
</comment>
<accession>B3QWS9</accession>
<name>RSMH_CHLT3</name>
<organism>
    <name type="scientific">Chloroherpeton thalassium (strain ATCC 35110 / GB-78)</name>
    <dbReference type="NCBI Taxonomy" id="517418"/>
    <lineage>
        <taxon>Bacteria</taxon>
        <taxon>Pseudomonadati</taxon>
        <taxon>Chlorobiota</taxon>
        <taxon>Chlorobiia</taxon>
        <taxon>Chlorobiales</taxon>
        <taxon>Chloroherpetonaceae</taxon>
        <taxon>Chloroherpeton</taxon>
    </lineage>
</organism>
<proteinExistence type="inferred from homology"/>
<sequence length="321" mass="35886">MSDFYHKPVLLEESVHWLVSESGMYIDATLGGAGHSKEILHRLETQHLLSNSLLIGIDRDANAIRAATTRLATYAAHAHILRGRFADLKLLLETNGLLDSGNHPIRGILLDLGISSHQIDAPARGFSFQQSGPLDMRMSDTAQLTAAEVVNHYDERSLSKIFFDYGEEREAKWIARKIVEARKQTPLETTAALALLIRQNLNRKSPVEQTKTLARIFQAIRIEVNGELDELKAVLQAAHEVLSEKGRLVVISYHSLEDRIVKQFFNECASEDWGPKGVVLDVPIKTATMKILTKKPVLASEEEIQENSRARSAKLRVAEKI</sequence>
<reference key="1">
    <citation type="submission" date="2008-06" db="EMBL/GenBank/DDBJ databases">
        <title>Complete sequence of Chloroherpeton thalassium ATCC 35110.</title>
        <authorList>
            <consortium name="US DOE Joint Genome Institute"/>
            <person name="Lucas S."/>
            <person name="Copeland A."/>
            <person name="Lapidus A."/>
            <person name="Glavina del Rio T."/>
            <person name="Dalin E."/>
            <person name="Tice H."/>
            <person name="Bruce D."/>
            <person name="Goodwin L."/>
            <person name="Pitluck S."/>
            <person name="Schmutz J."/>
            <person name="Larimer F."/>
            <person name="Land M."/>
            <person name="Hauser L."/>
            <person name="Kyrpides N."/>
            <person name="Mikhailova N."/>
            <person name="Liu Z."/>
            <person name="Li T."/>
            <person name="Zhao F."/>
            <person name="Overmann J."/>
            <person name="Bryant D.A."/>
            <person name="Richardson P."/>
        </authorList>
    </citation>
    <scope>NUCLEOTIDE SEQUENCE [LARGE SCALE GENOMIC DNA]</scope>
    <source>
        <strain>ATCC 35110 / GB-78</strain>
    </source>
</reference>
<protein>
    <recommendedName>
        <fullName evidence="1">Ribosomal RNA small subunit methyltransferase H</fullName>
        <ecNumber evidence="1">2.1.1.199</ecNumber>
    </recommendedName>
    <alternativeName>
        <fullName evidence="1">16S rRNA m(4)C1402 methyltransferase</fullName>
    </alternativeName>
    <alternativeName>
        <fullName evidence="1">rRNA (cytosine-N(4)-)-methyltransferase RsmH</fullName>
    </alternativeName>
</protein>
<evidence type="ECO:0000255" key="1">
    <source>
        <dbReference type="HAMAP-Rule" id="MF_01007"/>
    </source>
</evidence>
<feature type="chain" id="PRO_0000386804" description="Ribosomal RNA small subunit methyltransferase H">
    <location>
        <begin position="1"/>
        <end position="321"/>
    </location>
</feature>
<feature type="binding site" evidence="1">
    <location>
        <begin position="33"/>
        <end position="35"/>
    </location>
    <ligand>
        <name>S-adenosyl-L-methionine</name>
        <dbReference type="ChEBI" id="CHEBI:59789"/>
    </ligand>
</feature>
<feature type="binding site" evidence="1">
    <location>
        <position position="58"/>
    </location>
    <ligand>
        <name>S-adenosyl-L-methionine</name>
        <dbReference type="ChEBI" id="CHEBI:59789"/>
    </ligand>
</feature>
<feature type="binding site" evidence="1">
    <location>
        <position position="85"/>
    </location>
    <ligand>
        <name>S-adenosyl-L-methionine</name>
        <dbReference type="ChEBI" id="CHEBI:59789"/>
    </ligand>
</feature>
<feature type="binding site" evidence="1">
    <location>
        <position position="111"/>
    </location>
    <ligand>
        <name>S-adenosyl-L-methionine</name>
        <dbReference type="ChEBI" id="CHEBI:59789"/>
    </ligand>
</feature>
<feature type="binding site" evidence="1">
    <location>
        <position position="118"/>
    </location>
    <ligand>
        <name>S-adenosyl-L-methionine</name>
        <dbReference type="ChEBI" id="CHEBI:59789"/>
    </ligand>
</feature>